<organism>
    <name type="scientific">Escherichia coli (strain K12)</name>
    <dbReference type="NCBI Taxonomy" id="83333"/>
    <lineage>
        <taxon>Bacteria</taxon>
        <taxon>Pseudomonadati</taxon>
        <taxon>Pseudomonadota</taxon>
        <taxon>Gammaproteobacteria</taxon>
        <taxon>Enterobacterales</taxon>
        <taxon>Enterobacteriaceae</taxon>
        <taxon>Escherichia</taxon>
    </lineage>
</organism>
<name>CRA_ECOLI</name>
<keyword id="KW-0002">3D-structure</keyword>
<keyword id="KW-0010">Activator</keyword>
<keyword id="KW-0238">DNA-binding</keyword>
<keyword id="KW-1185">Reference proteome</keyword>
<keyword id="KW-0678">Repressor</keyword>
<keyword id="KW-0804">Transcription</keyword>
<keyword id="KW-0805">Transcription regulation</keyword>
<protein>
    <recommendedName>
        <fullName>Catabolite repressor/activator</fullName>
    </recommendedName>
    <alternativeName>
        <fullName>Fructose repressor</fullName>
    </alternativeName>
</protein>
<feature type="chain" id="PRO_0000107945" description="Catabolite repressor/activator">
    <location>
        <begin position="1"/>
        <end position="334"/>
    </location>
</feature>
<feature type="domain" description="HTH lacI-type" evidence="1">
    <location>
        <begin position="1"/>
        <end position="58"/>
    </location>
</feature>
<feature type="DNA-binding region" description="H-T-H motif" evidence="1">
    <location>
        <begin position="3"/>
        <end position="22"/>
    </location>
</feature>
<feature type="helix" evidence="11">
    <location>
        <begin position="3"/>
        <end position="10"/>
    </location>
</feature>
<feature type="helix" evidence="11">
    <location>
        <begin position="14"/>
        <end position="22"/>
    </location>
</feature>
<feature type="turn" evidence="11">
    <location>
        <begin position="25"/>
        <end position="29"/>
    </location>
</feature>
<feature type="helix" evidence="11">
    <location>
        <begin position="33"/>
        <end position="45"/>
    </location>
</feature>
<feature type="strand" evidence="12">
    <location>
        <begin position="63"/>
        <end position="69"/>
    </location>
</feature>
<feature type="helix" evidence="12">
    <location>
        <begin position="74"/>
        <end position="89"/>
    </location>
</feature>
<feature type="strand" evidence="12">
    <location>
        <begin position="93"/>
        <end position="98"/>
    </location>
</feature>
<feature type="helix" evidence="12">
    <location>
        <begin position="103"/>
        <end position="115"/>
    </location>
</feature>
<feature type="strand" evidence="12">
    <location>
        <begin position="119"/>
        <end position="123"/>
    </location>
</feature>
<feature type="helix" evidence="12">
    <location>
        <begin position="132"/>
        <end position="135"/>
    </location>
</feature>
<feature type="turn" evidence="12">
    <location>
        <begin position="136"/>
        <end position="139"/>
    </location>
</feature>
<feature type="strand" evidence="12">
    <location>
        <begin position="140"/>
        <end position="142"/>
    </location>
</feature>
<feature type="strand" evidence="12">
    <location>
        <begin position="144"/>
        <end position="149"/>
    </location>
</feature>
<feature type="turn" evidence="12">
    <location>
        <begin position="153"/>
        <end position="155"/>
    </location>
</feature>
<feature type="strand" evidence="12">
    <location>
        <begin position="157"/>
        <end position="161"/>
    </location>
</feature>
<feature type="helix" evidence="12">
    <location>
        <begin position="163"/>
        <end position="175"/>
    </location>
</feature>
<feature type="strand" evidence="12">
    <location>
        <begin position="180"/>
        <end position="187"/>
    </location>
</feature>
<feature type="helix" evidence="12">
    <location>
        <begin position="192"/>
        <end position="205"/>
    </location>
</feature>
<feature type="strand" evidence="12">
    <location>
        <begin position="212"/>
        <end position="220"/>
    </location>
</feature>
<feature type="helix" evidence="12">
    <location>
        <begin position="222"/>
        <end position="232"/>
    </location>
</feature>
<feature type="turn" evidence="12">
    <location>
        <begin position="233"/>
        <end position="235"/>
    </location>
</feature>
<feature type="strand" evidence="12">
    <location>
        <begin position="240"/>
        <end position="246"/>
    </location>
</feature>
<feature type="helix" evidence="12">
    <location>
        <begin position="247"/>
        <end position="261"/>
    </location>
</feature>
<feature type="strand" evidence="12">
    <location>
        <begin position="269"/>
        <end position="274"/>
    </location>
</feature>
<feature type="helix" evidence="12">
    <location>
        <begin position="277"/>
        <end position="281"/>
    </location>
</feature>
<feature type="strand" evidence="12">
    <location>
        <begin position="283"/>
        <end position="290"/>
    </location>
</feature>
<feature type="helix" evidence="12">
    <location>
        <begin position="293"/>
        <end position="309"/>
    </location>
</feature>
<feature type="strand" evidence="12">
    <location>
        <begin position="310"/>
        <end position="312"/>
    </location>
</feature>
<feature type="strand" evidence="12">
    <location>
        <begin position="317"/>
        <end position="321"/>
    </location>
</feature>
<feature type="strand" evidence="12">
    <location>
        <begin position="324"/>
        <end position="329"/>
    </location>
</feature>
<feature type="helix" evidence="12">
    <location>
        <begin position="330"/>
        <end position="333"/>
    </location>
</feature>
<gene>
    <name type="primary">cra</name>
    <name type="synonym">fruC</name>
    <name type="synonym">fruR</name>
    <name type="synonym">shl</name>
    <name type="ordered locus">b0080</name>
    <name type="ordered locus">JW0078</name>
</gene>
<reference key="1">
    <citation type="journal article" date="1990" name="J. Bacteriol.">
        <title>Molecular cloning, nucleotide sequence, and expression of shl, a new gene in the 2-minute region of the genetic map of Escherichia coli.</title>
        <authorList>
            <person name="Leclerc G."/>
            <person name="Noel G."/>
            <person name="Drapeau G.R."/>
        </authorList>
    </citation>
    <scope>NUCLEOTIDE SEQUENCE [GENOMIC DNA]</scope>
</reference>
<reference key="2">
    <citation type="journal article" date="1991" name="Mol. Gen. Genet.">
        <title>Nucleotide sequence of the ilvH-fruR gene region of Escherichia coli K12 and Salmonella typhimurium LT2.</title>
        <authorList>
            <person name="Jahreis K."/>
            <person name="Postma P.W."/>
            <person name="Lengeler J.W."/>
        </authorList>
    </citation>
    <scope>NUCLEOTIDE SEQUENCE [GENOMIC DNA]</scope>
    <source>
        <strain>K12</strain>
    </source>
</reference>
<reference key="3">
    <citation type="journal article" date="1992" name="Nucleic Acids Res.">
        <title>Systematic sequencing of the Escherichia coli genome: analysis of the 0-2.4 min region.</title>
        <authorList>
            <person name="Yura T."/>
            <person name="Mori H."/>
            <person name="Nagai H."/>
            <person name="Nagata T."/>
            <person name="Ishihama A."/>
            <person name="Fujita N."/>
            <person name="Isono K."/>
            <person name="Mizobuchi K."/>
            <person name="Nakata A."/>
        </authorList>
    </citation>
    <scope>NUCLEOTIDE SEQUENCE [LARGE SCALE GENOMIC DNA]</scope>
    <source>
        <strain>K12</strain>
    </source>
</reference>
<reference key="4">
    <citation type="journal article" date="1997" name="Science">
        <title>The complete genome sequence of Escherichia coli K-12.</title>
        <authorList>
            <person name="Blattner F.R."/>
            <person name="Plunkett G. III"/>
            <person name="Bloch C.A."/>
            <person name="Perna N.T."/>
            <person name="Burland V."/>
            <person name="Riley M."/>
            <person name="Collado-Vides J."/>
            <person name="Glasner J.D."/>
            <person name="Rode C.K."/>
            <person name="Mayhew G.F."/>
            <person name="Gregor J."/>
            <person name="Davis N.W."/>
            <person name="Kirkpatrick H.A."/>
            <person name="Goeden M.A."/>
            <person name="Rose D.J."/>
            <person name="Mau B."/>
            <person name="Shao Y."/>
        </authorList>
    </citation>
    <scope>NUCLEOTIDE SEQUENCE [LARGE SCALE GENOMIC DNA]</scope>
    <source>
        <strain>K12 / MG1655 / ATCC 47076</strain>
    </source>
</reference>
<reference key="5">
    <citation type="journal article" date="2006" name="Mol. Syst. Biol.">
        <title>Highly accurate genome sequences of Escherichia coli K-12 strains MG1655 and W3110.</title>
        <authorList>
            <person name="Hayashi K."/>
            <person name="Morooka N."/>
            <person name="Yamamoto Y."/>
            <person name="Fujita K."/>
            <person name="Isono K."/>
            <person name="Choi S."/>
            <person name="Ohtsubo E."/>
            <person name="Baba T."/>
            <person name="Wanner B.L."/>
            <person name="Mori H."/>
            <person name="Horiuchi T."/>
        </authorList>
    </citation>
    <scope>NUCLEOTIDE SEQUENCE [LARGE SCALE GENOMIC DNA]</scope>
    <source>
        <strain>K12 / W3110 / ATCC 27325 / DSM 5911</strain>
    </source>
</reference>
<reference key="6">
    <citation type="journal article" date="1993" name="J. Mol. Biol.">
        <title>In vitro binding of the pleiotropic transcriptional regulatory protein, FruR, to the fru, pps, ace, pts and icd operons of Escherichia coli and Salmonella typhimurium.</title>
        <authorList>
            <person name="Ramseier T.M."/>
            <person name="Negre D."/>
            <person name="Cortay J.C."/>
            <person name="Scarabel M."/>
            <person name="Cozzone A.J."/>
            <person name="Saier M.H. Jr."/>
        </authorList>
    </citation>
    <scope>FUNCTION</scope>
    <scope>DNA-BINDING</scope>
    <scope>ACTIVITY REGULATION</scope>
</reference>
<reference key="7">
    <citation type="journal article" date="1994" name="J. Biol. Chem.">
        <title>In vitro asymmetric binding of the pleiotropic regulatory protein, FruR, to the ace operator controlling glyoxylate shunt enzyme synthesis.</title>
        <authorList>
            <person name="Cortay J.C."/>
            <person name="Negre D."/>
            <person name="Scarabel M."/>
            <person name="Ramseier T.M."/>
            <person name="Vartak N.B."/>
            <person name="Reizer J."/>
            <person name="Saier M.H. Jr."/>
            <person name="Cozzone A.J."/>
        </authorList>
    </citation>
    <scope>FUNCTION IN GLYOXYLATE SHUNT REGULATION</scope>
    <scope>DNA-BINDING</scope>
    <scope>SUBUNIT</scope>
    <source>
        <strain>K12</strain>
    </source>
</reference>
<reference key="8">
    <citation type="journal article" date="1995" name="Mol. Microbiol.">
        <title>The global regulatory protein FruR modulates the direction of carbon flow in Escherichia coli.</title>
        <authorList>
            <person name="Ramseier T.M."/>
            <person name="Bledig S."/>
            <person name="Michotey V."/>
            <person name="Feghali R."/>
            <person name="Saier M.H. Jr."/>
        </authorList>
    </citation>
    <scope>FUNCTION IN REGULATION OF CARBON METABOLISM</scope>
</reference>
<reference key="9">
    <citation type="journal article" date="1996" name="J. Bacteriol.">
        <title>Frur mediates catabolite activation of pyruvate kinase (pykF) gene expression in Escherichia coli.</title>
        <authorList>
            <person name="Bledig S.A."/>
            <person name="Ramseier T.M."/>
            <person name="Saier M.H. Jr."/>
        </authorList>
    </citation>
    <scope>FUNCTION</scope>
    <scope>DNA-BINDING</scope>
</reference>
<reference key="10">
    <citation type="journal article" date="1996" name="Mol. Microbiol.">
        <title>Definition of a consensus DNA-binding site for the Escherichia coli pleiotropic regulatory protein, FruR.</title>
        <authorList>
            <person name="Negre D."/>
            <person name="Bonod-Bidaud C."/>
            <person name="Geourjon C."/>
            <person name="Deleage G."/>
            <person name="Cozzone A.J."/>
            <person name="Cortay J.C."/>
        </authorList>
    </citation>
    <scope>FUNCTION</scope>
    <scope>DNA-BINDING</scope>
</reference>
<reference key="11">
    <citation type="journal article" date="1996" name="Res. Microbiol.">
        <title>Cra and the control of carbon flux via metabolic pathways.</title>
        <authorList>
            <person name="Ramseier T.M."/>
        </authorList>
    </citation>
    <scope>FUNCTION</scope>
    <scope>GENE NAME</scope>
</reference>
<reference key="12">
    <citation type="journal article" date="1996" name="J. Bacteriol.">
        <title>The catabolite repressor/activator (Cra) protein of enteric bacteria.</title>
        <authorList>
            <person name="Saier M.H. Jr."/>
            <person name="Ramseier T.M."/>
        </authorList>
    </citation>
    <scope>REVIEW</scope>
</reference>
<reference key="13">
    <citation type="journal article" date="1997" name="J. Bacteriol.">
        <title>Regulation of expression of the ethanol dehydrogenase gene (adhE) in Escherichia coli by catabolite repressor activator protein Cra.</title>
        <authorList>
            <person name="Mikulskis A."/>
            <person name="Aristarkhov A."/>
            <person name="Lin E.C."/>
        </authorList>
    </citation>
    <scope>FUNCTION</scope>
    <scope>DNA-BINDING</scope>
</reference>
<reference key="14">
    <citation type="journal article" date="2005" name="Genes Cells">
        <title>Systematic search for the Cra-binding promoters using genomic SELEX system.</title>
        <authorList>
            <person name="Shimada T."/>
            <person name="Fujita N."/>
            <person name="Maeda M."/>
            <person name="Ishihama A."/>
        </authorList>
    </citation>
    <scope>FUNCTION</scope>
    <scope>DNA-BINDING</scope>
    <source>
        <strain>K12 / W3110 / ATCC 27325 / DSM 5911</strain>
    </source>
</reference>
<reference key="15">
    <citation type="journal article" date="1997" name="J. Mol. Biol.">
        <title>Three-dimensional structure of the DNA-binding domain of the fructose repressor from Escherichia coli by 1H and 15N NMR.</title>
        <authorList>
            <person name="Penin F."/>
            <person name="Geourjon C."/>
            <person name="Montserret R."/>
            <person name="Boeckmann A."/>
            <person name="Lesage A."/>
            <person name="Yang Y.S."/>
            <person name="Bonod-Bidaud C."/>
            <person name="Cortay J.-C."/>
            <person name="Negre D."/>
            <person name="Cozzone A.J."/>
            <person name="Deleage G."/>
        </authorList>
    </citation>
    <scope>STRUCTURE BY NMR OF 1-57</scope>
</reference>
<dbReference type="EMBL" id="M35034">
    <property type="protein sequence ID" value="AAA24629.1"/>
    <property type="molecule type" value="Genomic_DNA"/>
</dbReference>
<dbReference type="EMBL" id="X55034">
    <property type="protein sequence ID" value="CAA38857.1"/>
    <property type="molecule type" value="Genomic_DNA"/>
</dbReference>
<dbReference type="EMBL" id="X55457">
    <property type="protein sequence ID" value="CAA39104.1"/>
    <property type="molecule type" value="Genomic_DNA"/>
</dbReference>
<dbReference type="EMBL" id="U00096">
    <property type="protein sequence ID" value="AAC73191.1"/>
    <property type="molecule type" value="Genomic_DNA"/>
</dbReference>
<dbReference type="EMBL" id="AP009048">
    <property type="protein sequence ID" value="BAB96648.1"/>
    <property type="molecule type" value="Genomic_DNA"/>
</dbReference>
<dbReference type="PIR" id="JU0298">
    <property type="entry name" value="JU0298"/>
</dbReference>
<dbReference type="RefSeq" id="NP_414622.1">
    <property type="nucleotide sequence ID" value="NC_000913.3"/>
</dbReference>
<dbReference type="RefSeq" id="WP_000762401.1">
    <property type="nucleotide sequence ID" value="NZ_STEB01000010.1"/>
</dbReference>
<dbReference type="PDB" id="1UXC">
    <property type="method" value="NMR"/>
    <property type="chains" value="A=1-57"/>
</dbReference>
<dbReference type="PDB" id="1UXD">
    <property type="method" value="NMR"/>
    <property type="chains" value="A=1-57"/>
</dbReference>
<dbReference type="PDB" id="2IKS">
    <property type="method" value="X-ray"/>
    <property type="resolution" value="1.85 A"/>
    <property type="chains" value="A/B=44-334"/>
</dbReference>
<dbReference type="PDBsum" id="1UXC"/>
<dbReference type="PDBsum" id="1UXD"/>
<dbReference type="PDBsum" id="2IKS"/>
<dbReference type="SMR" id="P0ACP1"/>
<dbReference type="BioGRID" id="4259359">
    <property type="interactions" value="98"/>
</dbReference>
<dbReference type="BioGRID" id="849205">
    <property type="interactions" value="2"/>
</dbReference>
<dbReference type="DIP" id="DIP-35838N"/>
<dbReference type="FunCoup" id="P0ACP1">
    <property type="interactions" value="229"/>
</dbReference>
<dbReference type="IntAct" id="P0ACP1">
    <property type="interactions" value="12"/>
</dbReference>
<dbReference type="STRING" id="511145.b0080"/>
<dbReference type="jPOST" id="P0ACP1"/>
<dbReference type="PaxDb" id="511145-b0080"/>
<dbReference type="EnsemblBacteria" id="AAC73191">
    <property type="protein sequence ID" value="AAC73191"/>
    <property type="gene ID" value="b0080"/>
</dbReference>
<dbReference type="GeneID" id="86862590"/>
<dbReference type="GeneID" id="944804"/>
<dbReference type="KEGG" id="ecj:JW0078"/>
<dbReference type="KEGG" id="eco:b0080"/>
<dbReference type="PATRIC" id="fig|1411691.4.peg.2201"/>
<dbReference type="EchoBASE" id="EB0334"/>
<dbReference type="eggNOG" id="COG1609">
    <property type="taxonomic scope" value="Bacteria"/>
</dbReference>
<dbReference type="HOGENOM" id="CLU_037628_6_0_6"/>
<dbReference type="InParanoid" id="P0ACP1"/>
<dbReference type="OMA" id="NSRKAGY"/>
<dbReference type="OrthoDB" id="7055227at2"/>
<dbReference type="PhylomeDB" id="P0ACP1"/>
<dbReference type="BioCyc" id="EcoCyc:PD00521"/>
<dbReference type="EvolutionaryTrace" id="P0ACP1"/>
<dbReference type="PRO" id="PR:P0ACP1"/>
<dbReference type="Proteomes" id="UP000000625">
    <property type="component" value="Chromosome"/>
</dbReference>
<dbReference type="GO" id="GO:0000987">
    <property type="term" value="F:cis-regulatory region sequence-specific DNA binding"/>
    <property type="evidence" value="ECO:0000314"/>
    <property type="project" value="EcoCyc"/>
</dbReference>
<dbReference type="GO" id="GO:0003700">
    <property type="term" value="F:DNA-binding transcription factor activity"/>
    <property type="evidence" value="ECO:0000318"/>
    <property type="project" value="GO_Central"/>
</dbReference>
<dbReference type="GO" id="GO:0042802">
    <property type="term" value="F:identical protein binding"/>
    <property type="evidence" value="ECO:0000314"/>
    <property type="project" value="EcoCyc"/>
</dbReference>
<dbReference type="GO" id="GO:0000976">
    <property type="term" value="F:transcription cis-regulatory region binding"/>
    <property type="evidence" value="ECO:0000318"/>
    <property type="project" value="GO_Central"/>
</dbReference>
<dbReference type="GO" id="GO:0006355">
    <property type="term" value="P:regulation of DNA-templated transcription"/>
    <property type="evidence" value="ECO:0000318"/>
    <property type="project" value="GO_Central"/>
</dbReference>
<dbReference type="GO" id="GO:2000142">
    <property type="term" value="P:regulation of DNA-templated transcription initiation"/>
    <property type="evidence" value="ECO:0000314"/>
    <property type="project" value="EcoCyc"/>
</dbReference>
<dbReference type="GO" id="GO:0009750">
    <property type="term" value="P:response to fructose"/>
    <property type="evidence" value="ECO:0007669"/>
    <property type="project" value="InterPro"/>
</dbReference>
<dbReference type="CDD" id="cd01392">
    <property type="entry name" value="HTH_LacI"/>
    <property type="match status" value="1"/>
</dbReference>
<dbReference type="CDD" id="cd06274">
    <property type="entry name" value="PBP1_FruR"/>
    <property type="match status" value="1"/>
</dbReference>
<dbReference type="FunFam" id="1.10.260.40:FF:000008">
    <property type="entry name" value="Fructose repressor (Catabolite repressor/activator)"/>
    <property type="match status" value="1"/>
</dbReference>
<dbReference type="FunFam" id="3.40.50.2300:FF:000022">
    <property type="entry name" value="Fructose repressor (Catabolite repressor/activator)"/>
    <property type="match status" value="1"/>
</dbReference>
<dbReference type="FunFam" id="3.40.50.2300:FF:000049">
    <property type="entry name" value="Fructose repressor FruR"/>
    <property type="match status" value="1"/>
</dbReference>
<dbReference type="Gene3D" id="3.40.50.2300">
    <property type="match status" value="2"/>
</dbReference>
<dbReference type="Gene3D" id="1.10.260.40">
    <property type="entry name" value="lambda repressor-like DNA-binding domains"/>
    <property type="match status" value="1"/>
</dbReference>
<dbReference type="InterPro" id="IPR012781">
    <property type="entry name" value="Fruct_sucro_rep"/>
</dbReference>
<dbReference type="InterPro" id="IPR000843">
    <property type="entry name" value="HTH_LacI"/>
</dbReference>
<dbReference type="InterPro" id="IPR010982">
    <property type="entry name" value="Lambda_DNA-bd_dom_sf"/>
</dbReference>
<dbReference type="InterPro" id="IPR001761">
    <property type="entry name" value="Peripla_BP/Lac1_sug-bd_dom"/>
</dbReference>
<dbReference type="InterPro" id="IPR028082">
    <property type="entry name" value="Peripla_BP_I"/>
</dbReference>
<dbReference type="NCBIfam" id="TIGR02417">
    <property type="entry name" value="fruct_sucro_rep"/>
    <property type="match status" value="1"/>
</dbReference>
<dbReference type="NCBIfam" id="NF008452">
    <property type="entry name" value="PRK11303.1"/>
    <property type="match status" value="1"/>
</dbReference>
<dbReference type="PANTHER" id="PTHR30146:SF45">
    <property type="entry name" value="CATABOLITE REPRESSOR_ACTIVATOR"/>
    <property type="match status" value="1"/>
</dbReference>
<dbReference type="PANTHER" id="PTHR30146">
    <property type="entry name" value="LACI-RELATED TRANSCRIPTIONAL REPRESSOR"/>
    <property type="match status" value="1"/>
</dbReference>
<dbReference type="Pfam" id="PF00356">
    <property type="entry name" value="LacI"/>
    <property type="match status" value="1"/>
</dbReference>
<dbReference type="Pfam" id="PF00532">
    <property type="entry name" value="Peripla_BP_1"/>
    <property type="match status" value="1"/>
</dbReference>
<dbReference type="SMART" id="SM00354">
    <property type="entry name" value="HTH_LACI"/>
    <property type="match status" value="1"/>
</dbReference>
<dbReference type="SUPFAM" id="SSF47413">
    <property type="entry name" value="lambda repressor-like DNA-binding domains"/>
    <property type="match status" value="1"/>
</dbReference>
<dbReference type="SUPFAM" id="SSF53822">
    <property type="entry name" value="Periplasmic binding protein-like I"/>
    <property type="match status" value="1"/>
</dbReference>
<dbReference type="PROSITE" id="PS00356">
    <property type="entry name" value="HTH_LACI_1"/>
    <property type="match status" value="1"/>
</dbReference>
<dbReference type="PROSITE" id="PS50932">
    <property type="entry name" value="HTH_LACI_2"/>
    <property type="match status" value="1"/>
</dbReference>
<sequence length="334" mass="37999">MKLDEIARLAGVSRTTASYVINGKAKQYRVSDKTVEKVMAVVREHNYHPNAVAAGLRAGRTRSIGLVIPDLENTSYTRIANYLERQARQRGYQLLIACSEDQPDNEMRCIEHLLQRQVDAIIVSTSLPPEHPFYQRWANDPFPIVALDRALDREHFTSVVGADQDDAEMLAEELRKFPAETVLYLGALPELSVSFLREQGFRTAWKDDPREVHFLYANSYEREAAAQLFEKWLETHPMPQALFTTSFALLQGVMDVTLRRDGKLPSDLAIATFGDNELLDFLQCPVLAVAQRHRDVAERVLEIVLASLDEPRKPKPGLTRIKRNLYRRGVLSRS</sequence>
<comment type="function">
    <text evidence="2 3 4 5 6 7 8 9">Global transcriptional regulator, which plays an important role in the regulation of carbon metabolism. Activates transcription of genes encoding biosynthetic and oxidative enzymes (involved in Krebs cycle, glyoxylate shunt and gluconeogenesis, such as ppsA and fbp). Represses genes involved in sugar catabolism, such as fruB, pfkA, pykF and adhE. Binds asymmetrically to the two half-sites of its operator.</text>
</comment>
<comment type="activity regulation">
    <text evidence="4">Is displaced from DNA by low concentrations of fructose-1-phosphate.</text>
</comment>
<comment type="subunit">
    <text evidence="3">Homotetramer.</text>
</comment>
<comment type="miscellaneous">
    <text evidence="10">Activation of transcription is observed when the Cra operator is upstream of the RNA polymerase binding site. Inhibition of transcription is observed when the operator overlaps or is downstream of the RNA polymerase binding site (PubMed:8655535).</text>
</comment>
<evidence type="ECO:0000255" key="1">
    <source>
        <dbReference type="PROSITE-ProRule" id="PRU00111"/>
    </source>
</evidence>
<evidence type="ECO:0000269" key="2">
    <source>
    </source>
</evidence>
<evidence type="ECO:0000269" key="3">
    <source>
    </source>
</evidence>
<evidence type="ECO:0000269" key="4">
    <source>
    </source>
</evidence>
<evidence type="ECO:0000269" key="5">
    <source>
    </source>
</evidence>
<evidence type="ECO:0000269" key="6">
    <source>
    </source>
</evidence>
<evidence type="ECO:0000269" key="7">
    <source>
    </source>
</evidence>
<evidence type="ECO:0000269" key="8">
    <source>
    </source>
</evidence>
<evidence type="ECO:0000269" key="9">
    <source>
    </source>
</evidence>
<evidence type="ECO:0000305" key="10">
    <source>
    </source>
</evidence>
<evidence type="ECO:0007829" key="11">
    <source>
        <dbReference type="PDB" id="1UXC"/>
    </source>
</evidence>
<evidence type="ECO:0007829" key="12">
    <source>
        <dbReference type="PDB" id="2IKS"/>
    </source>
</evidence>
<accession>P0ACP1</accession>
<accession>P21168</accession>
<proteinExistence type="evidence at protein level"/>